<evidence type="ECO:0000250" key="1"/>
<evidence type="ECO:0000255" key="2"/>
<evidence type="ECO:0000305" key="3"/>
<accession>P9WGG6</accession>
<accession>F2GFW7</accession>
<accession>O06289</accession>
<accession>Q79FQ9</accession>
<accession>Q7D8K8</accession>
<dbReference type="EMBL" id="AE000516">
    <property type="protein sequence ID" value="AAK45516.1"/>
    <property type="molecule type" value="Genomic_DNA"/>
</dbReference>
<dbReference type="PIR" id="H70507">
    <property type="entry name" value="H70507"/>
</dbReference>
<dbReference type="RefSeq" id="WP_003406257.1">
    <property type="nucleotide sequence ID" value="NZ_KK341227.1"/>
</dbReference>
<dbReference type="SMR" id="P9WGG6"/>
<dbReference type="GeneID" id="45425191"/>
<dbReference type="KEGG" id="mtc:MT1259"/>
<dbReference type="PATRIC" id="fig|83331.31.peg.1360"/>
<dbReference type="HOGENOM" id="CLU_047691_1_0_11"/>
<dbReference type="Proteomes" id="UP000001020">
    <property type="component" value="Chromosome"/>
</dbReference>
<dbReference type="GO" id="GO:0003677">
    <property type="term" value="F:DNA binding"/>
    <property type="evidence" value="ECO:0007669"/>
    <property type="project" value="UniProtKB-KW"/>
</dbReference>
<dbReference type="GO" id="GO:0016987">
    <property type="term" value="F:sigma factor activity"/>
    <property type="evidence" value="ECO:0007669"/>
    <property type="project" value="UniProtKB-KW"/>
</dbReference>
<dbReference type="GO" id="GO:0006352">
    <property type="term" value="P:DNA-templated transcription initiation"/>
    <property type="evidence" value="ECO:0007669"/>
    <property type="project" value="InterPro"/>
</dbReference>
<dbReference type="CDD" id="cd06171">
    <property type="entry name" value="Sigma70_r4"/>
    <property type="match status" value="1"/>
</dbReference>
<dbReference type="FunFam" id="1.10.10.10:FF:000068">
    <property type="entry name" value="RNA polymerase sigma factor"/>
    <property type="match status" value="1"/>
</dbReference>
<dbReference type="FunFam" id="1.10.1740.10:FF:000007">
    <property type="entry name" value="RNA polymerase sigma factor SigE"/>
    <property type="match status" value="1"/>
</dbReference>
<dbReference type="Gene3D" id="1.10.1740.10">
    <property type="match status" value="1"/>
</dbReference>
<dbReference type="Gene3D" id="1.10.10.10">
    <property type="entry name" value="Winged helix-like DNA-binding domain superfamily/Winged helix DNA-binding domain"/>
    <property type="match status" value="1"/>
</dbReference>
<dbReference type="InterPro" id="IPR039425">
    <property type="entry name" value="RNA_pol_sigma-70-like"/>
</dbReference>
<dbReference type="InterPro" id="IPR014284">
    <property type="entry name" value="RNA_pol_sigma-70_dom"/>
</dbReference>
<dbReference type="InterPro" id="IPR007627">
    <property type="entry name" value="RNA_pol_sigma70_r2"/>
</dbReference>
<dbReference type="InterPro" id="IPR013249">
    <property type="entry name" value="RNA_pol_sigma70_r4_t2"/>
</dbReference>
<dbReference type="InterPro" id="IPR013325">
    <property type="entry name" value="RNA_pol_sigma_r2"/>
</dbReference>
<dbReference type="InterPro" id="IPR013324">
    <property type="entry name" value="RNA_pol_sigma_r3/r4-like"/>
</dbReference>
<dbReference type="InterPro" id="IPR036388">
    <property type="entry name" value="WH-like_DNA-bd_sf"/>
</dbReference>
<dbReference type="NCBIfam" id="NF007229">
    <property type="entry name" value="PRK09647.1"/>
    <property type="match status" value="1"/>
</dbReference>
<dbReference type="NCBIfam" id="TIGR02937">
    <property type="entry name" value="sigma70-ECF"/>
    <property type="match status" value="1"/>
</dbReference>
<dbReference type="PANTHER" id="PTHR43133">
    <property type="entry name" value="RNA POLYMERASE ECF-TYPE SIGMA FACTO"/>
    <property type="match status" value="1"/>
</dbReference>
<dbReference type="PANTHER" id="PTHR43133:SF8">
    <property type="entry name" value="RNA POLYMERASE SIGMA FACTOR HI_1459-RELATED"/>
    <property type="match status" value="1"/>
</dbReference>
<dbReference type="Pfam" id="PF04542">
    <property type="entry name" value="Sigma70_r2"/>
    <property type="match status" value="1"/>
</dbReference>
<dbReference type="Pfam" id="PF08281">
    <property type="entry name" value="Sigma70_r4_2"/>
    <property type="match status" value="1"/>
</dbReference>
<dbReference type="SUPFAM" id="SSF88946">
    <property type="entry name" value="Sigma2 domain of RNA polymerase sigma factors"/>
    <property type="match status" value="1"/>
</dbReference>
<dbReference type="SUPFAM" id="SSF88659">
    <property type="entry name" value="Sigma3 and sigma4 domains of RNA polymerase sigma factors"/>
    <property type="match status" value="1"/>
</dbReference>
<protein>
    <recommendedName>
        <fullName>ECF RNA polymerase sigma factor SigE</fullName>
        <shortName>ECF sigma factor SigE</shortName>
    </recommendedName>
    <alternativeName>
        <fullName>Alternative RNA polymerase sigma factor SigE</fullName>
    </alternativeName>
    <alternativeName>
        <fullName>RNA polymerase sigma-E factor</fullName>
        <shortName>Sigma-E factor</shortName>
    </alternativeName>
</protein>
<feature type="chain" id="PRO_0000428365" description="ECF RNA polymerase sigma factor SigE">
    <location>
        <begin position="1"/>
        <end position="257"/>
    </location>
</feature>
<feature type="DNA-binding region" description="H-T-H motif" evidence="1">
    <location>
        <begin position="211"/>
        <end position="230"/>
    </location>
</feature>
<feature type="region of interest" description="Sigma-70 factor domain-2">
    <location>
        <begin position="87"/>
        <end position="153"/>
    </location>
</feature>
<feature type="region of interest" description="Sigma-70 factor domain-4">
    <location>
        <begin position="186"/>
        <end position="236"/>
    </location>
</feature>
<feature type="short sequence motif" description="Polymerase core binding" evidence="2">
    <location>
        <begin position="111"/>
        <end position="114"/>
    </location>
</feature>
<organism>
    <name type="scientific">Mycobacterium tuberculosis (strain CDC 1551 / Oshkosh)</name>
    <dbReference type="NCBI Taxonomy" id="83331"/>
    <lineage>
        <taxon>Bacteria</taxon>
        <taxon>Bacillati</taxon>
        <taxon>Actinomycetota</taxon>
        <taxon>Actinomycetes</taxon>
        <taxon>Mycobacteriales</taxon>
        <taxon>Mycobacteriaceae</taxon>
        <taxon>Mycobacterium</taxon>
        <taxon>Mycobacterium tuberculosis complex</taxon>
    </lineage>
</organism>
<sequence>MELLGGPRVGNTESQLCVADGDDLPTYCSANSEDLNITTITTLSPTSMSHPQQVRDDQWVEPSDQLQGTAVFDATGDKATMPSWDELVRQHADRVYRLAYRLSGNQHDAEDLTQETFIRVFRSVQNYQPGTFEGWLHRITTNLFLDMVRRRARIRMEALPEDYDRVPADEPNPEQIYHDARLGPDLQAALASLPPEFRAAVVLCDIEGLSYEEIGATLGVKLGTVRSRIHRGRQALRDYLAAHPEHGECAVHVNPVR</sequence>
<name>SIGE_MYCTO</name>
<reference key="1">
    <citation type="journal article" date="2002" name="J. Bacteriol.">
        <title>Whole-genome comparison of Mycobacterium tuberculosis clinical and laboratory strains.</title>
        <authorList>
            <person name="Fleischmann R.D."/>
            <person name="Alland D."/>
            <person name="Eisen J.A."/>
            <person name="Carpenter L."/>
            <person name="White O."/>
            <person name="Peterson J.D."/>
            <person name="DeBoy R.T."/>
            <person name="Dodson R.J."/>
            <person name="Gwinn M.L."/>
            <person name="Haft D.H."/>
            <person name="Hickey E.K."/>
            <person name="Kolonay J.F."/>
            <person name="Nelson W.C."/>
            <person name="Umayam L.A."/>
            <person name="Ermolaeva M.D."/>
            <person name="Salzberg S.L."/>
            <person name="Delcher A."/>
            <person name="Utterback T.R."/>
            <person name="Weidman J.F."/>
            <person name="Khouri H.M."/>
            <person name="Gill J."/>
            <person name="Mikula A."/>
            <person name="Bishai W."/>
            <person name="Jacobs W.R. Jr."/>
            <person name="Venter J.C."/>
            <person name="Fraser C.M."/>
        </authorList>
    </citation>
    <scope>NUCLEOTIDE SEQUENCE [LARGE SCALE GENOMIC DNA]</scope>
    <source>
        <strain>CDC 1551 / Oshkosh</strain>
    </source>
</reference>
<comment type="function">
    <text evidence="1">Sigma factors are initiation factors that promote the attachment of RNA polymerase to specific initiation sites and are then released. Extracytoplasmic function (ECF) sigma factors are held in an inactive form by an anti-sigma factor until released (By similarity).</text>
</comment>
<comment type="subunit">
    <text evidence="1">Interacts transiently with the RNA polymerase catalytic core formed by RpoA, RpoB, RpoC and RpoZ (2 alpha, 1 beta, 1 beta' and 1 omega subunit) to form the RNA polymerase holoenzyme that can initiate transcription.</text>
</comment>
<comment type="domain">
    <text evidence="1">The sigma-70 factor domain-2 mediates sequence-specific interaction with the -10 element in promoter DNA, and plays an important role in melting the double-stranded DNA and the formation of the transcription bubble. The sigma-70 factor domain-2 mediates interaction with the RNA polymerase subunits RpoB and RpoC (By similarity).</text>
</comment>
<comment type="domain">
    <text evidence="3">The sigma-70 factor domain-4 contains a helix-turn-helix (H-T-H) motif that mediates interaction with the -35 element in promoter DNA. The domain also mediates interaction with the RNA polymerase subunit RpoA. Interactions between sigma-70 factor domain-4 and anti-sigma factors prevents interaction of sigma factors with the RNA polymerase catalytic core (Probable).</text>
</comment>
<comment type="similarity">
    <text evidence="3">Belongs to the sigma-70 factor family. ECF subfamily.</text>
</comment>
<keyword id="KW-0238">DNA-binding</keyword>
<keyword id="KW-1185">Reference proteome</keyword>
<keyword id="KW-0731">Sigma factor</keyword>
<keyword id="KW-0804">Transcription</keyword>
<keyword id="KW-0805">Transcription regulation</keyword>
<proteinExistence type="inferred from homology"/>
<gene>
    <name type="primary">sigE</name>
    <name type="ordered locus">MT1259</name>
</gene>